<dbReference type="EMBL" id="L43967">
    <property type="protein sequence ID" value="AAC71351.1"/>
    <property type="molecule type" value="Genomic_DNA"/>
</dbReference>
<dbReference type="EMBL" id="U02144">
    <property type="protein sequence ID" value="AAD12423.1"/>
    <property type="status" value="ALT_INIT"/>
    <property type="molecule type" value="Genomic_DNA"/>
</dbReference>
<dbReference type="PIR" id="H64214">
    <property type="entry name" value="H64214"/>
</dbReference>
<dbReference type="RefSeq" id="WP_010869347.1">
    <property type="nucleotide sequence ID" value="NC_000908.2"/>
</dbReference>
<dbReference type="SMR" id="P47380"/>
<dbReference type="STRING" id="243273.MG_134"/>
<dbReference type="GeneID" id="88282259"/>
<dbReference type="KEGG" id="mge:MG_134"/>
<dbReference type="eggNOG" id="COG0718">
    <property type="taxonomic scope" value="Bacteria"/>
</dbReference>
<dbReference type="HOGENOM" id="CLU_140930_1_2_14"/>
<dbReference type="InParanoid" id="P47380"/>
<dbReference type="OrthoDB" id="399030at2"/>
<dbReference type="BioCyc" id="MGEN243273:G1GJ2-148-MONOMER"/>
<dbReference type="Proteomes" id="UP000000807">
    <property type="component" value="Chromosome"/>
</dbReference>
<dbReference type="GO" id="GO:0003677">
    <property type="term" value="F:DNA binding"/>
    <property type="evidence" value="ECO:0007669"/>
    <property type="project" value="InterPro"/>
</dbReference>
<dbReference type="Gene3D" id="3.30.1310.10">
    <property type="entry name" value="Nucleoid-associated protein YbaB-like domain"/>
    <property type="match status" value="1"/>
</dbReference>
<dbReference type="InterPro" id="IPR036894">
    <property type="entry name" value="YbaB-like_sf"/>
</dbReference>
<dbReference type="InterPro" id="IPR004401">
    <property type="entry name" value="YbaB/EbfC"/>
</dbReference>
<dbReference type="NCBIfam" id="TIGR00103">
    <property type="entry name" value="DNA_YbaB_EbfC"/>
    <property type="match status" value="1"/>
</dbReference>
<dbReference type="Pfam" id="PF02575">
    <property type="entry name" value="YbaB_DNA_bd"/>
    <property type="match status" value="1"/>
</dbReference>
<dbReference type="PIRSF" id="PIRSF004555">
    <property type="entry name" value="UCP004555"/>
    <property type="match status" value="1"/>
</dbReference>
<dbReference type="SUPFAM" id="SSF82607">
    <property type="entry name" value="YbaB-like"/>
    <property type="match status" value="1"/>
</dbReference>
<sequence length="100" mass="11386">MSFKKIAEMMRQAERETKKKTLAFEQQAFEYNYKNGAIKITILGDLTLKSINIDPVLIDASDKVILEEMIIEATNEAVSDVKTKYDNLVEKTMPKVPGLF</sequence>
<protein>
    <recommendedName>
        <fullName>Uncharacterized protein MG134</fullName>
    </recommendedName>
</protein>
<feature type="chain" id="PRO_0000210436" description="Uncharacterized protein MG134">
    <location>
        <begin position="1"/>
        <end position="100"/>
    </location>
</feature>
<evidence type="ECO:0000305" key="1"/>
<comment type="sequence caution" evidence="1">
    <conflict type="erroneous initiation">
        <sequence resource="EMBL-CDS" id="AAD12423"/>
    </conflict>
</comment>
<reference key="1">
    <citation type="journal article" date="1995" name="Science">
        <title>The minimal gene complement of Mycoplasma genitalium.</title>
        <authorList>
            <person name="Fraser C.M."/>
            <person name="Gocayne J.D."/>
            <person name="White O."/>
            <person name="Adams M.D."/>
            <person name="Clayton R.A."/>
            <person name="Fleischmann R.D."/>
            <person name="Bult C.J."/>
            <person name="Kerlavage A.R."/>
            <person name="Sutton G.G."/>
            <person name="Kelley J.M."/>
            <person name="Fritchman J.L."/>
            <person name="Weidman J.F."/>
            <person name="Small K.V."/>
            <person name="Sandusky M."/>
            <person name="Fuhrmann J.L."/>
            <person name="Nguyen D.T."/>
            <person name="Utterback T.R."/>
            <person name="Saudek D.M."/>
            <person name="Phillips C.A."/>
            <person name="Merrick J.M."/>
            <person name="Tomb J.-F."/>
            <person name="Dougherty B.A."/>
            <person name="Bott K.F."/>
            <person name="Hu P.-C."/>
            <person name="Lucier T.S."/>
            <person name="Peterson S.N."/>
            <person name="Smith H.O."/>
            <person name="Hutchison C.A. III"/>
            <person name="Venter J.C."/>
        </authorList>
    </citation>
    <scope>NUCLEOTIDE SEQUENCE [LARGE SCALE GENOMIC DNA]</scope>
    <source>
        <strain>ATCC 33530 / DSM 19775 / NCTC 10195 / G37</strain>
    </source>
</reference>
<reference key="2">
    <citation type="journal article" date="1993" name="J. Bacteriol.">
        <title>A survey of the Mycoplasma genitalium genome by using random sequencing.</title>
        <authorList>
            <person name="Peterson S.N."/>
            <person name="Hu P.-C."/>
            <person name="Bott K.F."/>
            <person name="Hutchison C.A. III"/>
        </authorList>
    </citation>
    <scope>NUCLEOTIDE SEQUENCE [GENOMIC DNA] OF 1-36</scope>
    <source>
        <strain>ATCC 33530 / DSM 19775 / NCTC 10195 / G37</strain>
    </source>
</reference>
<gene>
    <name type="ordered locus">MG134</name>
</gene>
<proteinExistence type="predicted"/>
<keyword id="KW-1185">Reference proteome</keyword>
<organism>
    <name type="scientific">Mycoplasma genitalium (strain ATCC 33530 / DSM 19775 / NCTC 10195 / G37)</name>
    <name type="common">Mycoplasmoides genitalium</name>
    <dbReference type="NCBI Taxonomy" id="243273"/>
    <lineage>
        <taxon>Bacteria</taxon>
        <taxon>Bacillati</taxon>
        <taxon>Mycoplasmatota</taxon>
        <taxon>Mycoplasmoidales</taxon>
        <taxon>Mycoplasmoidaceae</taxon>
        <taxon>Mycoplasmoides</taxon>
    </lineage>
</organism>
<accession>P47380</accession>
<accession>Q49273</accession>
<name>Y134_MYCGE</name>